<organism>
    <name type="scientific">Monkeypox virus</name>
    <dbReference type="NCBI Taxonomy" id="10244"/>
    <lineage>
        <taxon>Viruses</taxon>
        <taxon>Varidnaviria</taxon>
        <taxon>Bamfordvirae</taxon>
        <taxon>Nucleocytoviricota</taxon>
        <taxon>Pokkesviricetes</taxon>
        <taxon>Chitovirales</taxon>
        <taxon>Poxviridae</taxon>
        <taxon>Chordopoxvirinae</taxon>
        <taxon>Orthopoxvirus</taxon>
    </lineage>
</organism>
<comment type="function">
    <text evidence="1">Acts with RNA polymerase to initiate transcription from intermediate gene promoters.</text>
</comment>
<comment type="subunit">
    <text evidence="1">Heterodimer of a 45 kDa (A23R) and a 32 kDa (A8R) subunit to form the virus intermediate transcription factor (VITF)-3.</text>
</comment>
<comment type="induction">
    <text>Expressed in the early phase of the viral replicative cycle.</text>
</comment>
<comment type="similarity">
    <text evidence="2">Belongs to the orthopoxvirus OPG134 family.</text>
</comment>
<proteinExistence type="evidence at transcript level"/>
<evidence type="ECO:0000250" key="1">
    <source>
        <dbReference type="UniProtKB" id="P68720"/>
    </source>
</evidence>
<evidence type="ECO:0000305" key="2"/>
<sequence length="292" mass="34013">MFEPVPDLNLEASVELGEVNIDQTTPMIKENSGFISRSRRLFAHRSKDDERKLALRFFLQRLYFLDHREIHYLFRCVDAVKDVTITKKNNIIVAPYIALLTIASKGCKLTETMIEAFFPELYNEHSKKFKFNSQVSIIQEKLGYQSGNYHVYDFEPYYSTVALAIRDEHSSGIFNIRQESYLVSSLSEITYRFYLINLKSDLVQWSASTGAVINQMVNTVLITVYEKLQLAIENDSQFTCSLAVESELPIKLLKDRNELFTKFINELKKTSSFKISKRDKDTLLKHFTYDWS</sequence>
<gene>
    <name type="primary">OPG134</name>
    <name type="synonym">VITF3S</name>
    <name type="ORF">MPXVgp119</name>
</gene>
<dbReference type="EMBL" id="MT903340">
    <property type="protein sequence ID" value="QNP12989.1"/>
    <property type="molecule type" value="Genomic_DNA"/>
</dbReference>
<dbReference type="RefSeq" id="YP_010377116.1">
    <property type="nucleotide sequence ID" value="NC_063383.1"/>
</dbReference>
<dbReference type="SMR" id="A0A7H0DNA6"/>
<dbReference type="GeneID" id="72551529"/>
<dbReference type="Proteomes" id="UP000516359">
    <property type="component" value="Genome"/>
</dbReference>
<dbReference type="InterPro" id="IPR006834">
    <property type="entry name" value="Pox_A8"/>
</dbReference>
<dbReference type="Pfam" id="PF04745">
    <property type="entry name" value="Pox_A8"/>
    <property type="match status" value="1"/>
</dbReference>
<keyword id="KW-0010">Activator</keyword>
<keyword id="KW-0244">Early protein</keyword>
<keyword id="KW-1185">Reference proteome</keyword>
<keyword id="KW-0804">Transcription</keyword>
<keyword id="KW-0805">Transcription regulation</keyword>
<feature type="chain" id="PRO_0000457497" description="Intermediate transcription factor 3 small subunit">
    <location>
        <begin position="1"/>
        <end position="292"/>
    </location>
</feature>
<protein>
    <recommendedName>
        <fullName>Intermediate transcription factor 3 small subunit</fullName>
    </recommendedName>
    <alternativeName>
        <fullName>VITF-3 32 kDa subunit</fullName>
    </alternativeName>
    <alternativeName>
        <fullName>VITF-3 small subunit</fullName>
    </alternativeName>
</protein>
<reference key="1">
    <citation type="journal article" date="2022" name="J. Infect. Dis.">
        <title>Exportation of Monkeypox virus from the African continent.</title>
        <authorList>
            <person name="Mauldin M.R."/>
            <person name="McCollum A.M."/>
            <person name="Nakazawa Y.J."/>
            <person name="Mandra A."/>
            <person name="Whitehouse E.R."/>
            <person name="Davidson W."/>
            <person name="Zhao H."/>
            <person name="Gao J."/>
            <person name="Li Y."/>
            <person name="Doty J."/>
            <person name="Yinka-Ogunleye A."/>
            <person name="Akinpelu A."/>
            <person name="Aruna O."/>
            <person name="Naidoo D."/>
            <person name="Lewandowski K."/>
            <person name="Afrough B."/>
            <person name="Graham V."/>
            <person name="Aarons E."/>
            <person name="Hewson R."/>
            <person name="Vipond R."/>
            <person name="Dunning J."/>
            <person name="Chand M."/>
            <person name="Brown C."/>
            <person name="Cohen-Gihon I."/>
            <person name="Erez N."/>
            <person name="Shifman O."/>
            <person name="Israeli O."/>
            <person name="Sharon M."/>
            <person name="Schwartz E."/>
            <person name="Beth-Din A."/>
            <person name="Zvi A."/>
            <person name="Mak T.M."/>
            <person name="Ng Y.K."/>
            <person name="Cui L."/>
            <person name="Lin R.T.P."/>
            <person name="Olson V.A."/>
            <person name="Brooks T."/>
            <person name="Paran N."/>
            <person name="Ihekweazu C."/>
            <person name="Reynolds M.G."/>
        </authorList>
    </citation>
    <scope>NUCLEOTIDE SEQUENCE [LARGE SCALE GENOMIC DNA]</scope>
    <source>
        <strain>MPXV-M5312_HM12_Rivers</strain>
    </source>
</reference>
<name>VTF3S_MONPV</name>
<organismHost>
    <name type="scientific">Cynomys gunnisoni</name>
    <name type="common">Gunnison's prairie dog</name>
    <name type="synonym">Spermophilus gunnisoni</name>
    <dbReference type="NCBI Taxonomy" id="45479"/>
</organismHost>
<organismHost>
    <name type="scientific">Cynomys leucurus</name>
    <name type="common">White-tailed prairie dog</name>
    <dbReference type="NCBI Taxonomy" id="99825"/>
</organismHost>
<organismHost>
    <name type="scientific">Cynomys ludovicianus</name>
    <name type="common">Black-tailed prairie dog</name>
    <dbReference type="NCBI Taxonomy" id="45480"/>
</organismHost>
<organismHost>
    <name type="scientific">Cynomys mexicanus</name>
    <name type="common">Mexican prairie dog</name>
    <dbReference type="NCBI Taxonomy" id="99826"/>
</organismHost>
<organismHost>
    <name type="scientific">Cynomys parvidens</name>
    <name type="common">Utah prairie dog</name>
    <dbReference type="NCBI Taxonomy" id="99827"/>
</organismHost>
<organismHost>
    <name type="scientific">Gliridae</name>
    <name type="common">dormice</name>
    <dbReference type="NCBI Taxonomy" id="30650"/>
</organismHost>
<organismHost>
    <name type="scientific">Heliosciurus ruwenzorii</name>
    <name type="common">Ruwenzori sun squirrel</name>
    <dbReference type="NCBI Taxonomy" id="226685"/>
</organismHost>
<organismHost>
    <name type="scientific">Homo sapiens</name>
    <name type="common">Human</name>
    <dbReference type="NCBI Taxonomy" id="9606"/>
</organismHost>
<organismHost>
    <name type="scientific">Mus musculus</name>
    <name type="common">Mouse</name>
    <dbReference type="NCBI Taxonomy" id="10090"/>
</organismHost>
<accession>A0A7H0DNA6</accession>